<evidence type="ECO:0000269" key="1">
    <source>
    </source>
</evidence>
<evidence type="ECO:0000269" key="2">
    <source>
    </source>
</evidence>
<evidence type="ECO:0000269" key="3">
    <source>
    </source>
</evidence>
<evidence type="ECO:0000269" key="4">
    <source>
    </source>
</evidence>
<evidence type="ECO:0000269" key="5">
    <source>
    </source>
</evidence>
<evidence type="ECO:0000269" key="6">
    <source>
    </source>
</evidence>
<evidence type="ECO:0000303" key="7">
    <source>
    </source>
</evidence>
<evidence type="ECO:0000305" key="8"/>
<evidence type="ECO:0000305" key="9">
    <source>
    </source>
</evidence>
<evidence type="ECO:0000305" key="10">
    <source>
    </source>
</evidence>
<evidence type="ECO:0007829" key="11">
    <source>
        <dbReference type="PDB" id="8D8L"/>
    </source>
</evidence>
<keyword id="KW-0002">3D-structure</keyword>
<keyword id="KW-0496">Mitochondrion</keyword>
<keyword id="KW-1185">Reference proteome</keyword>
<keyword id="KW-0687">Ribonucleoprotein</keyword>
<keyword id="KW-0689">Ribosomal protein</keyword>
<gene>
    <name type="primary">MRP2</name>
    <name type="ordered locus">YPR166C</name>
    <name type="ORF">P9325.7</name>
</gene>
<protein>
    <recommendedName>
        <fullName evidence="7">Small ribosomal subunit protein uS14m</fullName>
    </recommendedName>
    <alternativeName>
        <fullName>37S ribosomal protein MRP2, mitochondrial</fullName>
    </alternativeName>
</protein>
<accession>P10663</accession>
<accession>D6W4G7</accession>
<sequence length="115" mass="13538">MGNFRFPIKTKLPPGFINARILRDNFKRQQFKENEILVKSLKFIARNMNLPTKLRLEAQLKLNALPNYMRSTQIKNRCVDSGHARFVLSDFRLCRYQFRENALKGNLPGVKKGIW</sequence>
<name>RT02_YEAST</name>
<dbReference type="EMBL" id="M15161">
    <property type="protein sequence ID" value="AAA74728.1"/>
    <property type="molecule type" value="Genomic_DNA"/>
</dbReference>
<dbReference type="EMBL" id="U25840">
    <property type="protein sequence ID" value="AAB68153.1"/>
    <property type="molecule type" value="Genomic_DNA"/>
</dbReference>
<dbReference type="EMBL" id="AY558052">
    <property type="protein sequence ID" value="AAS56378.1"/>
    <property type="molecule type" value="Genomic_DNA"/>
</dbReference>
<dbReference type="EMBL" id="BK006949">
    <property type="protein sequence ID" value="DAA11583.1"/>
    <property type="molecule type" value="Genomic_DNA"/>
</dbReference>
<dbReference type="PIR" id="B29138">
    <property type="entry name" value="R3BY14"/>
</dbReference>
<dbReference type="RefSeq" id="NP_015492.1">
    <property type="nucleotide sequence ID" value="NM_001184263.1"/>
</dbReference>
<dbReference type="PDB" id="5MRC">
    <property type="method" value="EM"/>
    <property type="resolution" value="3.25 A"/>
    <property type="chains" value="NN=1-115"/>
</dbReference>
<dbReference type="PDB" id="5MRE">
    <property type="method" value="EM"/>
    <property type="resolution" value="3.75 A"/>
    <property type="chains" value="NN=1-115"/>
</dbReference>
<dbReference type="PDB" id="5MRF">
    <property type="method" value="EM"/>
    <property type="resolution" value="4.97 A"/>
    <property type="chains" value="NN=1-115"/>
</dbReference>
<dbReference type="PDB" id="8D8K">
    <property type="method" value="EM"/>
    <property type="resolution" value="3.13 A"/>
    <property type="chains" value="N=1-115"/>
</dbReference>
<dbReference type="PDB" id="8D8L">
    <property type="method" value="EM"/>
    <property type="resolution" value="2.60 A"/>
    <property type="chains" value="N=1-115"/>
</dbReference>
<dbReference type="PDB" id="8OM2">
    <property type="method" value="EM"/>
    <property type="resolution" value="2.57 A"/>
    <property type="chains" value="N=1-115"/>
</dbReference>
<dbReference type="PDB" id="8OM3">
    <property type="method" value="EM"/>
    <property type="resolution" value="2.87 A"/>
    <property type="chains" value="N=1-115"/>
</dbReference>
<dbReference type="PDB" id="8OM4">
    <property type="method" value="EM"/>
    <property type="resolution" value="2.32 A"/>
    <property type="chains" value="N=1-115"/>
</dbReference>
<dbReference type="PDBsum" id="5MRC"/>
<dbReference type="PDBsum" id="5MRE"/>
<dbReference type="PDBsum" id="5MRF"/>
<dbReference type="PDBsum" id="8D8K"/>
<dbReference type="PDBsum" id="8D8L"/>
<dbReference type="PDBsum" id="8OM2"/>
<dbReference type="PDBsum" id="8OM3"/>
<dbReference type="PDBsum" id="8OM4"/>
<dbReference type="EMDB" id="EMD-16966"/>
<dbReference type="EMDB" id="EMD-16967"/>
<dbReference type="EMDB" id="EMD-16968"/>
<dbReference type="EMDB" id="EMD-27250"/>
<dbReference type="EMDB" id="EMD-27251"/>
<dbReference type="EMDB" id="EMD-3551"/>
<dbReference type="EMDB" id="EMD-3552"/>
<dbReference type="EMDB" id="EMD-3553"/>
<dbReference type="SMR" id="P10663"/>
<dbReference type="BioGRID" id="36339">
    <property type="interactions" value="52"/>
</dbReference>
<dbReference type="ComplexPortal" id="CPX-1603">
    <property type="entry name" value="37S mitochondrial small ribosomal subunit"/>
</dbReference>
<dbReference type="FunCoup" id="P10663">
    <property type="interactions" value="699"/>
</dbReference>
<dbReference type="IntAct" id="P10663">
    <property type="interactions" value="38"/>
</dbReference>
<dbReference type="MINT" id="P10663"/>
<dbReference type="STRING" id="4932.YPR166C"/>
<dbReference type="iPTMnet" id="P10663"/>
<dbReference type="PaxDb" id="4932-YPR166C"/>
<dbReference type="PeptideAtlas" id="P10663"/>
<dbReference type="EnsemblFungi" id="YPR166C_mRNA">
    <property type="protein sequence ID" value="YPR166C"/>
    <property type="gene ID" value="YPR166C"/>
</dbReference>
<dbReference type="GeneID" id="856295"/>
<dbReference type="KEGG" id="sce:YPR166C"/>
<dbReference type="AGR" id="SGD:S000006370"/>
<dbReference type="SGD" id="S000006370">
    <property type="gene designation" value="MRP2"/>
</dbReference>
<dbReference type="VEuPathDB" id="FungiDB:YPR166C"/>
<dbReference type="eggNOG" id="KOG1741">
    <property type="taxonomic scope" value="Eukaryota"/>
</dbReference>
<dbReference type="GeneTree" id="ENSGT00390000015663"/>
<dbReference type="HOGENOM" id="CLU_139869_2_1_1"/>
<dbReference type="InParanoid" id="P10663"/>
<dbReference type="OMA" id="FGLCRNQ"/>
<dbReference type="OrthoDB" id="413436at2759"/>
<dbReference type="BioCyc" id="YEAST:G3O-34295-MONOMER"/>
<dbReference type="BioGRID-ORCS" id="856295">
    <property type="hits" value="0 hits in 10 CRISPR screens"/>
</dbReference>
<dbReference type="PRO" id="PR:P10663"/>
<dbReference type="Proteomes" id="UP000002311">
    <property type="component" value="Chromosome XVI"/>
</dbReference>
<dbReference type="RNAct" id="P10663">
    <property type="molecule type" value="protein"/>
</dbReference>
<dbReference type="GO" id="GO:0005743">
    <property type="term" value="C:mitochondrial inner membrane"/>
    <property type="evidence" value="ECO:0000303"/>
    <property type="project" value="ComplexPortal"/>
</dbReference>
<dbReference type="GO" id="GO:0005763">
    <property type="term" value="C:mitochondrial small ribosomal subunit"/>
    <property type="evidence" value="ECO:0000314"/>
    <property type="project" value="SGD"/>
</dbReference>
<dbReference type="GO" id="GO:0005739">
    <property type="term" value="C:mitochondrion"/>
    <property type="evidence" value="ECO:0007005"/>
    <property type="project" value="SGD"/>
</dbReference>
<dbReference type="GO" id="GO:0003735">
    <property type="term" value="F:structural constituent of ribosome"/>
    <property type="evidence" value="ECO:0000314"/>
    <property type="project" value="SGD"/>
</dbReference>
<dbReference type="GO" id="GO:0032543">
    <property type="term" value="P:mitochondrial translation"/>
    <property type="evidence" value="ECO:0000303"/>
    <property type="project" value="ComplexPortal"/>
</dbReference>
<dbReference type="GO" id="GO:0006412">
    <property type="term" value="P:translation"/>
    <property type="evidence" value="ECO:0000318"/>
    <property type="project" value="GO_Central"/>
</dbReference>
<dbReference type="FunFam" id="1.10.287.1480:FF:000001">
    <property type="entry name" value="30S ribosomal protein S14"/>
    <property type="match status" value="1"/>
</dbReference>
<dbReference type="Gene3D" id="1.10.287.1480">
    <property type="match status" value="1"/>
</dbReference>
<dbReference type="InterPro" id="IPR001209">
    <property type="entry name" value="Ribosomal_uS14"/>
</dbReference>
<dbReference type="InterPro" id="IPR018271">
    <property type="entry name" value="Ribosomal_uS14_CS"/>
</dbReference>
<dbReference type="PANTHER" id="PTHR19836">
    <property type="entry name" value="30S RIBOSOMAL PROTEIN S14"/>
    <property type="match status" value="1"/>
</dbReference>
<dbReference type="PANTHER" id="PTHR19836:SF19">
    <property type="entry name" value="SMALL RIBOSOMAL SUBUNIT PROTEIN US14M"/>
    <property type="match status" value="1"/>
</dbReference>
<dbReference type="Pfam" id="PF00253">
    <property type="entry name" value="Ribosomal_S14"/>
    <property type="match status" value="1"/>
</dbReference>
<dbReference type="SUPFAM" id="SSF57716">
    <property type="entry name" value="Glucocorticoid receptor-like (DNA-binding domain)"/>
    <property type="match status" value="1"/>
</dbReference>
<dbReference type="PROSITE" id="PS00527">
    <property type="entry name" value="RIBOSOMAL_S14"/>
    <property type="match status" value="1"/>
</dbReference>
<organism>
    <name type="scientific">Saccharomyces cerevisiae (strain ATCC 204508 / S288c)</name>
    <name type="common">Baker's yeast</name>
    <dbReference type="NCBI Taxonomy" id="559292"/>
    <lineage>
        <taxon>Eukaryota</taxon>
        <taxon>Fungi</taxon>
        <taxon>Dikarya</taxon>
        <taxon>Ascomycota</taxon>
        <taxon>Saccharomycotina</taxon>
        <taxon>Saccharomycetes</taxon>
        <taxon>Saccharomycetales</taxon>
        <taxon>Saccharomycetaceae</taxon>
        <taxon>Saccharomyces</taxon>
    </lineage>
</organism>
<proteinExistence type="evidence at protein level"/>
<comment type="function">
    <text evidence="9 10">Component of the mitochondrial ribosome (mitoribosome), a dedicated translation machinery responsible for the synthesis of mitochondrial genome-encoded proteins, including at least some of the essential transmembrane subunits of the mitochondrial respiratory chain. The mitoribosomes are attached to the mitochondrial inner membrane and translation products are cotranslationally integrated into the membrane.</text>
</comment>
<comment type="subunit">
    <text evidence="1 2 5 6">Component of the mitochondrial small ribosomal subunit (mt-SSU). Mature yeast 74S mitochondrial ribosomes consist of a small (37S) and a large (54S) subunit. The 37S small subunit contains a 15S ribosomal RNA (15S mt-rRNA) and 34 different proteins. The 54S large subunit contains a 21S rRNA (21S mt-rRNA) and 46 different proteins.</text>
</comment>
<comment type="subcellular location">
    <subcellularLocation>
        <location evidence="3">Mitochondrion</location>
    </subcellularLocation>
    <text evidence="4">Mitoribosomes are tethered to the mitochondrial inner membrane and spatially aligned with the membrane insertion machinery through two distinct membrane contact sites, formed by the 21S rRNA expansion segment 96-ES1 and the inner membrane protein MBA1.</text>
</comment>
<comment type="similarity">
    <text evidence="8">Belongs to the universal ribosomal protein uS14 family.</text>
</comment>
<feature type="chain" id="PRO_0000131017" description="Small ribosomal subunit protein uS14m">
    <location>
        <begin position="1"/>
        <end position="115"/>
    </location>
</feature>
<feature type="strand" evidence="11">
    <location>
        <begin position="4"/>
        <end position="8"/>
    </location>
</feature>
<feature type="helix" evidence="11">
    <location>
        <begin position="19"/>
        <end position="46"/>
    </location>
</feature>
<feature type="helix" evidence="11">
    <location>
        <begin position="52"/>
        <end position="64"/>
    </location>
</feature>
<feature type="helix" evidence="11">
    <location>
        <begin position="67"/>
        <end position="69"/>
    </location>
</feature>
<feature type="helix" evidence="11">
    <location>
        <begin position="71"/>
        <end position="73"/>
    </location>
</feature>
<feature type="turn" evidence="11">
    <location>
        <begin position="79"/>
        <end position="81"/>
    </location>
</feature>
<feature type="strand" evidence="11">
    <location>
        <begin position="85"/>
        <end position="87"/>
    </location>
</feature>
<feature type="turn" evidence="11">
    <location>
        <begin position="89"/>
        <end position="91"/>
    </location>
</feature>
<feature type="helix" evidence="11">
    <location>
        <begin position="95"/>
        <end position="103"/>
    </location>
</feature>
<feature type="strand" evidence="11">
    <location>
        <begin position="110"/>
        <end position="112"/>
    </location>
</feature>
<reference key="1">
    <citation type="journal article" date="1987" name="J. Biol. Chem.">
        <title>Assembly of the mitochondrial membrane system. MRP1 and MRP2, two yeast nuclear genes coding for mitochondrial ribosomal proteins.</title>
        <authorList>
            <person name="Myers A.M."/>
            <person name="Crivellone M.D."/>
            <person name="Tzagoloff A."/>
        </authorList>
    </citation>
    <scope>NUCLEOTIDE SEQUENCE [GENOMIC DNA]</scope>
</reference>
<reference key="2">
    <citation type="journal article" date="1997" name="Nature">
        <title>The nucleotide sequence of Saccharomyces cerevisiae chromosome XVI.</title>
        <authorList>
            <person name="Bussey H."/>
            <person name="Storms R.K."/>
            <person name="Ahmed A."/>
            <person name="Albermann K."/>
            <person name="Allen E."/>
            <person name="Ansorge W."/>
            <person name="Araujo R."/>
            <person name="Aparicio A."/>
            <person name="Barrell B.G."/>
            <person name="Badcock K."/>
            <person name="Benes V."/>
            <person name="Botstein D."/>
            <person name="Bowman S."/>
            <person name="Brueckner M."/>
            <person name="Carpenter J."/>
            <person name="Cherry J.M."/>
            <person name="Chung E."/>
            <person name="Churcher C.M."/>
            <person name="Coster F."/>
            <person name="Davis K."/>
            <person name="Davis R.W."/>
            <person name="Dietrich F.S."/>
            <person name="Delius H."/>
            <person name="DiPaolo T."/>
            <person name="Dubois E."/>
            <person name="Duesterhoeft A."/>
            <person name="Duncan M."/>
            <person name="Floeth M."/>
            <person name="Fortin N."/>
            <person name="Friesen J.D."/>
            <person name="Fritz C."/>
            <person name="Goffeau A."/>
            <person name="Hall J."/>
            <person name="Hebling U."/>
            <person name="Heumann K."/>
            <person name="Hilbert H."/>
            <person name="Hillier L.W."/>
            <person name="Hunicke-Smith S."/>
            <person name="Hyman R.W."/>
            <person name="Johnston M."/>
            <person name="Kalman S."/>
            <person name="Kleine K."/>
            <person name="Komp C."/>
            <person name="Kurdi O."/>
            <person name="Lashkari D."/>
            <person name="Lew H."/>
            <person name="Lin A."/>
            <person name="Lin D."/>
            <person name="Louis E.J."/>
            <person name="Marathe R."/>
            <person name="Messenguy F."/>
            <person name="Mewes H.-W."/>
            <person name="Mirtipati S."/>
            <person name="Moestl D."/>
            <person name="Mueller-Auer S."/>
            <person name="Namath A."/>
            <person name="Nentwich U."/>
            <person name="Oefner P."/>
            <person name="Pearson D."/>
            <person name="Petel F.X."/>
            <person name="Pohl T.M."/>
            <person name="Purnelle B."/>
            <person name="Rajandream M.A."/>
            <person name="Rechmann S."/>
            <person name="Rieger M."/>
            <person name="Riles L."/>
            <person name="Roberts D."/>
            <person name="Schaefer M."/>
            <person name="Scharfe M."/>
            <person name="Scherens B."/>
            <person name="Schramm S."/>
            <person name="Schroeder M."/>
            <person name="Sdicu A.-M."/>
            <person name="Tettelin H."/>
            <person name="Urrestarazu L.A."/>
            <person name="Ushinsky S."/>
            <person name="Vierendeels F."/>
            <person name="Vissers S."/>
            <person name="Voss H."/>
            <person name="Walsh S.V."/>
            <person name="Wambutt R."/>
            <person name="Wang Y."/>
            <person name="Wedler E."/>
            <person name="Wedler H."/>
            <person name="Winnett E."/>
            <person name="Zhong W.-W."/>
            <person name="Zollner A."/>
            <person name="Vo D.H."/>
            <person name="Hani J."/>
        </authorList>
    </citation>
    <scope>NUCLEOTIDE SEQUENCE [LARGE SCALE GENOMIC DNA]</scope>
    <source>
        <strain>ATCC 204508 / S288c</strain>
    </source>
</reference>
<reference key="3">
    <citation type="journal article" date="2014" name="G3 (Bethesda)">
        <title>The reference genome sequence of Saccharomyces cerevisiae: Then and now.</title>
        <authorList>
            <person name="Engel S.R."/>
            <person name="Dietrich F.S."/>
            <person name="Fisk D.G."/>
            <person name="Binkley G."/>
            <person name="Balakrishnan R."/>
            <person name="Costanzo M.C."/>
            <person name="Dwight S.S."/>
            <person name="Hitz B.C."/>
            <person name="Karra K."/>
            <person name="Nash R.S."/>
            <person name="Weng S."/>
            <person name="Wong E.D."/>
            <person name="Lloyd P."/>
            <person name="Skrzypek M.S."/>
            <person name="Miyasato S.R."/>
            <person name="Simison M."/>
            <person name="Cherry J.M."/>
        </authorList>
    </citation>
    <scope>GENOME REANNOTATION</scope>
    <source>
        <strain>ATCC 204508 / S288c</strain>
    </source>
</reference>
<reference key="4">
    <citation type="journal article" date="2007" name="Genome Res.">
        <title>Approaching a complete repository of sequence-verified protein-encoding clones for Saccharomyces cerevisiae.</title>
        <authorList>
            <person name="Hu Y."/>
            <person name="Rolfs A."/>
            <person name="Bhullar B."/>
            <person name="Murthy T.V.S."/>
            <person name="Zhu C."/>
            <person name="Berger M.F."/>
            <person name="Camargo A.A."/>
            <person name="Kelley F."/>
            <person name="McCarron S."/>
            <person name="Jepson D."/>
            <person name="Richardson A."/>
            <person name="Raphael J."/>
            <person name="Moreira D."/>
            <person name="Taycher E."/>
            <person name="Zuo D."/>
            <person name="Mohr S."/>
            <person name="Kane M.F."/>
            <person name="Williamson J."/>
            <person name="Simpson A.J.G."/>
            <person name="Bulyk M.L."/>
            <person name="Harlow E."/>
            <person name="Marsischky G."/>
            <person name="Kolodner R.D."/>
            <person name="LaBaer J."/>
        </authorList>
    </citation>
    <scope>NUCLEOTIDE SEQUENCE [GENOMIC DNA]</scope>
    <source>
        <strain>ATCC 204508 / S288c</strain>
    </source>
</reference>
<reference key="5">
    <citation type="journal article" date="1995" name="Mol. Gen. Genet.">
        <title>Incorporation of the yeast mitochondrial ribosomal protein Mrp2 into ribosomal subunits requires the mitochondrially encoded Var1 protein.</title>
        <authorList>
            <person name="Davis S.C."/>
            <person name="Ellis S.R."/>
        </authorList>
    </citation>
    <scope>SUBUNIT</scope>
</reference>
<reference key="6">
    <citation type="journal article" date="2001" name="J. Biol. Chem.">
        <title>Identification of 12 new yeast mitochondrial ribosomal proteins including 6 that have no prokaryotic homologues.</title>
        <authorList>
            <person name="Saveanu C."/>
            <person name="Fromont-Racine M."/>
            <person name="Harington A."/>
            <person name="Ricard F."/>
            <person name="Namane A."/>
            <person name="Jacquier A."/>
        </authorList>
    </citation>
    <scope>IDENTIFICATION IN THE MITOCHONDRIAL RIBOSOMAL SMALL COMPLEX</scope>
    <scope>IDENTIFICATION BY MASS SPECTROMETRY</scope>
</reference>
<reference key="7">
    <citation type="journal article" date="2002" name="Eur. J. Biochem.">
        <title>Tag-mediated isolation of yeast mitochondrial ribosome and mass spectrometric identification of its new components.</title>
        <authorList>
            <person name="Gan X."/>
            <person name="Kitakawa M."/>
            <person name="Yoshino K."/>
            <person name="Oshiro N."/>
            <person name="Yonezawa K."/>
            <person name="Isono K."/>
        </authorList>
    </citation>
    <scope>IDENTIFICATION IN THE MITOCHONDRIAL RIBOSOMAL SMALL COMPLEX</scope>
    <scope>IDENTIFICATION BY MASS SPECTROMETRY</scope>
</reference>
<reference key="8">
    <citation type="journal article" date="2003" name="Proc. Natl. Acad. Sci. U.S.A.">
        <title>The proteome of Saccharomyces cerevisiae mitochondria.</title>
        <authorList>
            <person name="Sickmann A."/>
            <person name="Reinders J."/>
            <person name="Wagner Y."/>
            <person name="Joppich C."/>
            <person name="Zahedi R.P."/>
            <person name="Meyer H.E."/>
            <person name="Schoenfisch B."/>
            <person name="Perschil I."/>
            <person name="Chacinska A."/>
            <person name="Guiard B."/>
            <person name="Rehling P."/>
            <person name="Pfanner N."/>
            <person name="Meisinger C."/>
        </authorList>
    </citation>
    <scope>SUBCELLULAR LOCATION [LARGE SCALE ANALYSIS]</scope>
    <source>
        <strain>ATCC 76625 / YPH499</strain>
    </source>
</reference>
<reference key="9">
    <citation type="journal article" date="2015" name="Nat. Commun.">
        <title>Organization of the mitochondrial translation machinery studied in situ by cryoelectron tomography.</title>
        <authorList>
            <person name="Pfeffer S."/>
            <person name="Woellhaf M.W."/>
            <person name="Herrmann J.M."/>
            <person name="Forster F."/>
        </authorList>
    </citation>
    <scope>SUBCELLULAR LOCATION</scope>
</reference>
<reference key="10">
    <citation type="journal article" date="2017" name="Science">
        <title>The structure of the yeast mitochondrial ribosome.</title>
        <authorList>
            <person name="Desai N."/>
            <person name="Brown A."/>
            <person name="Amunts A."/>
            <person name="Ramakrishnan V."/>
        </authorList>
    </citation>
    <scope>STRUCTURE BY ELECTRON MICROSCOPY (3.25 ANGSTROMS)</scope>
    <scope>SUBUNIT</scope>
</reference>